<proteinExistence type="inferred from homology"/>
<evidence type="ECO:0000255" key="1">
    <source>
        <dbReference type="HAMAP-Rule" id="MF_01416"/>
    </source>
</evidence>
<evidence type="ECO:0000305" key="2"/>
<gene>
    <name evidence="1" type="primary">atpH</name>
    <name type="ordered locus">RPC_0177</name>
</gene>
<accession>Q21CY4</accession>
<sequence>MAAENPSVSGVSGRYATALFELARDEKAVDAVKADLDRFKAMLADSPELTRLVRSPVFSAETQSKALAAVLDKAGFAGTTAKFLKVLTANRRLFTVTDVIRAYGALVAKFKGEATADVTVAEPLSEKNLDALKTALKSVTGKDVALNVNVDPAIIGGLVVKLGSRMVDSSLRTKLNSIKHAMKEAG</sequence>
<comment type="function">
    <text evidence="1">F(1)F(0) ATP synthase produces ATP from ADP in the presence of a proton or sodium gradient. F-type ATPases consist of two structural domains, F(1) containing the extramembraneous catalytic core and F(0) containing the membrane proton channel, linked together by a central stalk and a peripheral stalk. During catalysis, ATP synthesis in the catalytic domain of F(1) is coupled via a rotary mechanism of the central stalk subunits to proton translocation.</text>
</comment>
<comment type="function">
    <text evidence="1">This protein is part of the stalk that links CF(0) to CF(1). It either transmits conformational changes from CF(0) to CF(1) or is implicated in proton conduction.</text>
</comment>
<comment type="subunit">
    <text evidence="1">F-type ATPases have 2 components, F(1) - the catalytic core - and F(0) - the membrane proton channel. F(1) has five subunits: alpha(3), beta(3), gamma(1), delta(1), epsilon(1). CF(0) has four main subunits: a(1), b(1), b'(1) and c(10-14). The alpha and beta chains form an alternating ring which encloses part of the gamma chain. F(1) is attached to F(0) by a central stalk formed by the gamma and epsilon chains, while a peripheral stalk is formed by the delta, b and b' chains.</text>
</comment>
<comment type="subcellular location">
    <subcellularLocation>
        <location evidence="1">Cell inner membrane</location>
        <topology evidence="1">Peripheral membrane protein</topology>
    </subcellularLocation>
</comment>
<comment type="similarity">
    <text evidence="1">Belongs to the ATPase delta chain family.</text>
</comment>
<comment type="sequence caution" evidence="2">
    <conflict type="erroneous initiation">
        <sequence resource="EMBL-CDS" id="ABD85752"/>
    </conflict>
</comment>
<reference key="1">
    <citation type="submission" date="2006-03" db="EMBL/GenBank/DDBJ databases">
        <title>Complete sequence of Rhodopseudomonas palustris BisB18.</title>
        <authorList>
            <consortium name="US DOE Joint Genome Institute"/>
            <person name="Copeland A."/>
            <person name="Lucas S."/>
            <person name="Lapidus A."/>
            <person name="Barry K."/>
            <person name="Detter J.C."/>
            <person name="Glavina del Rio T."/>
            <person name="Hammon N."/>
            <person name="Israni S."/>
            <person name="Dalin E."/>
            <person name="Tice H."/>
            <person name="Pitluck S."/>
            <person name="Chain P."/>
            <person name="Malfatti S."/>
            <person name="Shin M."/>
            <person name="Vergez L."/>
            <person name="Schmutz J."/>
            <person name="Larimer F."/>
            <person name="Land M."/>
            <person name="Hauser L."/>
            <person name="Pelletier D.A."/>
            <person name="Kyrpides N."/>
            <person name="Anderson I."/>
            <person name="Oda Y."/>
            <person name="Harwood C.S."/>
            <person name="Richardson P."/>
        </authorList>
    </citation>
    <scope>NUCLEOTIDE SEQUENCE [LARGE SCALE GENOMIC DNA]</scope>
    <source>
        <strain>BisB18</strain>
    </source>
</reference>
<name>ATPD_RHOPB</name>
<organism>
    <name type="scientific">Rhodopseudomonas palustris (strain BisB18)</name>
    <dbReference type="NCBI Taxonomy" id="316056"/>
    <lineage>
        <taxon>Bacteria</taxon>
        <taxon>Pseudomonadati</taxon>
        <taxon>Pseudomonadota</taxon>
        <taxon>Alphaproteobacteria</taxon>
        <taxon>Hyphomicrobiales</taxon>
        <taxon>Nitrobacteraceae</taxon>
        <taxon>Rhodopseudomonas</taxon>
    </lineage>
</organism>
<dbReference type="EMBL" id="CP000301">
    <property type="protein sequence ID" value="ABD85752.1"/>
    <property type="status" value="ALT_INIT"/>
    <property type="molecule type" value="Genomic_DNA"/>
</dbReference>
<dbReference type="SMR" id="Q21CY4"/>
<dbReference type="STRING" id="316056.RPC_0177"/>
<dbReference type="KEGG" id="rpc:RPC_0177"/>
<dbReference type="eggNOG" id="COG0712">
    <property type="taxonomic scope" value="Bacteria"/>
</dbReference>
<dbReference type="HOGENOM" id="CLU_085114_0_1_5"/>
<dbReference type="OrthoDB" id="9796185at2"/>
<dbReference type="GO" id="GO:0005886">
    <property type="term" value="C:plasma membrane"/>
    <property type="evidence" value="ECO:0007669"/>
    <property type="project" value="UniProtKB-SubCell"/>
</dbReference>
<dbReference type="GO" id="GO:0045259">
    <property type="term" value="C:proton-transporting ATP synthase complex"/>
    <property type="evidence" value="ECO:0007669"/>
    <property type="project" value="UniProtKB-KW"/>
</dbReference>
<dbReference type="GO" id="GO:0046933">
    <property type="term" value="F:proton-transporting ATP synthase activity, rotational mechanism"/>
    <property type="evidence" value="ECO:0007669"/>
    <property type="project" value="UniProtKB-UniRule"/>
</dbReference>
<dbReference type="Gene3D" id="1.10.520.20">
    <property type="entry name" value="N-terminal domain of the delta subunit of the F1F0-ATP synthase"/>
    <property type="match status" value="1"/>
</dbReference>
<dbReference type="HAMAP" id="MF_01416">
    <property type="entry name" value="ATP_synth_delta_bact"/>
    <property type="match status" value="1"/>
</dbReference>
<dbReference type="InterPro" id="IPR026015">
    <property type="entry name" value="ATP_synth_OSCP/delta_N_sf"/>
</dbReference>
<dbReference type="InterPro" id="IPR020781">
    <property type="entry name" value="ATPase_OSCP/d_CS"/>
</dbReference>
<dbReference type="InterPro" id="IPR000711">
    <property type="entry name" value="ATPase_OSCP/dsu"/>
</dbReference>
<dbReference type="NCBIfam" id="TIGR01145">
    <property type="entry name" value="ATP_synt_delta"/>
    <property type="match status" value="1"/>
</dbReference>
<dbReference type="NCBIfam" id="NF004406">
    <property type="entry name" value="PRK05758.3-2"/>
    <property type="match status" value="1"/>
</dbReference>
<dbReference type="PANTHER" id="PTHR11910">
    <property type="entry name" value="ATP SYNTHASE DELTA CHAIN"/>
    <property type="match status" value="1"/>
</dbReference>
<dbReference type="Pfam" id="PF00213">
    <property type="entry name" value="OSCP"/>
    <property type="match status" value="1"/>
</dbReference>
<dbReference type="PRINTS" id="PR00125">
    <property type="entry name" value="ATPASEDELTA"/>
</dbReference>
<dbReference type="SUPFAM" id="SSF47928">
    <property type="entry name" value="N-terminal domain of the delta subunit of the F1F0-ATP synthase"/>
    <property type="match status" value="1"/>
</dbReference>
<dbReference type="PROSITE" id="PS00389">
    <property type="entry name" value="ATPASE_DELTA"/>
    <property type="match status" value="1"/>
</dbReference>
<keyword id="KW-0066">ATP synthesis</keyword>
<keyword id="KW-0997">Cell inner membrane</keyword>
<keyword id="KW-1003">Cell membrane</keyword>
<keyword id="KW-0139">CF(1)</keyword>
<keyword id="KW-0375">Hydrogen ion transport</keyword>
<keyword id="KW-0406">Ion transport</keyword>
<keyword id="KW-0472">Membrane</keyword>
<keyword id="KW-0813">Transport</keyword>
<feature type="chain" id="PRO_0000382147" description="ATP synthase subunit delta">
    <location>
        <begin position="1"/>
        <end position="186"/>
    </location>
</feature>
<protein>
    <recommendedName>
        <fullName evidence="1">ATP synthase subunit delta</fullName>
    </recommendedName>
    <alternativeName>
        <fullName evidence="1">ATP synthase F(1) sector subunit delta</fullName>
    </alternativeName>
    <alternativeName>
        <fullName evidence="1">F-type ATPase subunit delta</fullName>
        <shortName evidence="1">F-ATPase subunit delta</shortName>
    </alternativeName>
</protein>